<sequence>MQTIDSSSSAATTETLQIGHRQFQSRLMTGTGKYDDFETMRRSIAASGCEIVTVAVRRVQTNAPGHQGLAEAVDWNKVWMLPNTAGCQTAEEAVRVARLGREMAKLLGQEDNNFIKLEVIPDSKYLLPDPIGTLEAAEQLVKEGFAVLPYINADPLLAKRLEEVGCATVMPLGSPIGSGQGIKNMANIQIIIENATVPVVVDAGIGSPSEAAQAMEMGADAVLINTAIAKAQDPVMMATAMGMATQAGRFAYQSGRIPVKAYASASSPLAGRISS</sequence>
<name>THIG_ACAM1</name>
<reference key="1">
    <citation type="journal article" date="2008" name="Proc. Natl. Acad. Sci. U.S.A.">
        <title>Niche adaptation and genome expansion in the chlorophyll d-producing cyanobacterium Acaryochloris marina.</title>
        <authorList>
            <person name="Swingley W.D."/>
            <person name="Chen M."/>
            <person name="Cheung P.C."/>
            <person name="Conrad A.L."/>
            <person name="Dejesa L.C."/>
            <person name="Hao J."/>
            <person name="Honchak B.M."/>
            <person name="Karbach L.E."/>
            <person name="Kurdoglu A."/>
            <person name="Lahiri S."/>
            <person name="Mastrian S.D."/>
            <person name="Miyashita H."/>
            <person name="Page L."/>
            <person name="Ramakrishna P."/>
            <person name="Satoh S."/>
            <person name="Sattley W.M."/>
            <person name="Shimada Y."/>
            <person name="Taylor H.L."/>
            <person name="Tomo T."/>
            <person name="Tsuchiya T."/>
            <person name="Wang Z.T."/>
            <person name="Raymond J."/>
            <person name="Mimuro M."/>
            <person name="Blankenship R.E."/>
            <person name="Touchman J.W."/>
        </authorList>
    </citation>
    <scope>NUCLEOTIDE SEQUENCE [LARGE SCALE GENOMIC DNA]</scope>
    <source>
        <strain>MBIC 11017</strain>
    </source>
</reference>
<keyword id="KW-0963">Cytoplasm</keyword>
<keyword id="KW-1185">Reference proteome</keyword>
<keyword id="KW-0704">Schiff base</keyword>
<keyword id="KW-0784">Thiamine biosynthesis</keyword>
<keyword id="KW-0808">Transferase</keyword>
<protein>
    <recommendedName>
        <fullName evidence="1">Thiazole synthase</fullName>
        <ecNumber evidence="1">2.8.1.10</ecNumber>
    </recommendedName>
</protein>
<feature type="chain" id="PRO_1000080863" description="Thiazole synthase">
    <location>
        <begin position="1"/>
        <end position="275"/>
    </location>
</feature>
<feature type="active site" description="Schiff-base intermediate with DXP" evidence="1">
    <location>
        <position position="116"/>
    </location>
</feature>
<feature type="binding site" evidence="1">
    <location>
        <position position="177"/>
    </location>
    <ligand>
        <name>1-deoxy-D-xylulose 5-phosphate</name>
        <dbReference type="ChEBI" id="CHEBI:57792"/>
    </ligand>
</feature>
<feature type="binding site" evidence="1">
    <location>
        <begin position="203"/>
        <end position="204"/>
    </location>
    <ligand>
        <name>1-deoxy-D-xylulose 5-phosphate</name>
        <dbReference type="ChEBI" id="CHEBI:57792"/>
    </ligand>
</feature>
<feature type="binding site" evidence="1">
    <location>
        <begin position="225"/>
        <end position="226"/>
    </location>
    <ligand>
        <name>1-deoxy-D-xylulose 5-phosphate</name>
        <dbReference type="ChEBI" id="CHEBI:57792"/>
    </ligand>
</feature>
<dbReference type="EC" id="2.8.1.10" evidence="1"/>
<dbReference type="EMBL" id="CP000828">
    <property type="protein sequence ID" value="ABW28589.1"/>
    <property type="molecule type" value="Genomic_DNA"/>
</dbReference>
<dbReference type="RefSeq" id="WP_012163982.1">
    <property type="nucleotide sequence ID" value="NC_009925.1"/>
</dbReference>
<dbReference type="SMR" id="B0C390"/>
<dbReference type="STRING" id="329726.AM1_3599"/>
<dbReference type="KEGG" id="amr:AM1_3599"/>
<dbReference type="eggNOG" id="COG2022">
    <property type="taxonomic scope" value="Bacteria"/>
</dbReference>
<dbReference type="HOGENOM" id="CLU_062233_1_0_3"/>
<dbReference type="OrthoDB" id="9805935at2"/>
<dbReference type="UniPathway" id="UPA00060"/>
<dbReference type="Proteomes" id="UP000000268">
    <property type="component" value="Chromosome"/>
</dbReference>
<dbReference type="GO" id="GO:0005737">
    <property type="term" value="C:cytoplasm"/>
    <property type="evidence" value="ECO:0007669"/>
    <property type="project" value="UniProtKB-SubCell"/>
</dbReference>
<dbReference type="GO" id="GO:1990107">
    <property type="term" value="F:thiazole synthase activity"/>
    <property type="evidence" value="ECO:0007669"/>
    <property type="project" value="UniProtKB-EC"/>
</dbReference>
<dbReference type="GO" id="GO:0009229">
    <property type="term" value="P:thiamine diphosphate biosynthetic process"/>
    <property type="evidence" value="ECO:0007669"/>
    <property type="project" value="UniProtKB-UniRule"/>
</dbReference>
<dbReference type="CDD" id="cd04728">
    <property type="entry name" value="ThiG"/>
    <property type="match status" value="1"/>
</dbReference>
<dbReference type="Gene3D" id="3.20.20.70">
    <property type="entry name" value="Aldolase class I"/>
    <property type="match status" value="1"/>
</dbReference>
<dbReference type="HAMAP" id="MF_00443">
    <property type="entry name" value="ThiG"/>
    <property type="match status" value="1"/>
</dbReference>
<dbReference type="InterPro" id="IPR013785">
    <property type="entry name" value="Aldolase_TIM"/>
</dbReference>
<dbReference type="InterPro" id="IPR033983">
    <property type="entry name" value="Thiazole_synthase_ThiG"/>
</dbReference>
<dbReference type="InterPro" id="IPR008867">
    <property type="entry name" value="ThiG"/>
</dbReference>
<dbReference type="PANTHER" id="PTHR34266">
    <property type="entry name" value="THIAZOLE SYNTHASE"/>
    <property type="match status" value="1"/>
</dbReference>
<dbReference type="PANTHER" id="PTHR34266:SF2">
    <property type="entry name" value="THIAZOLE SYNTHASE"/>
    <property type="match status" value="1"/>
</dbReference>
<dbReference type="Pfam" id="PF05690">
    <property type="entry name" value="ThiG"/>
    <property type="match status" value="1"/>
</dbReference>
<dbReference type="SUPFAM" id="SSF110399">
    <property type="entry name" value="ThiG-like"/>
    <property type="match status" value="1"/>
</dbReference>
<organism>
    <name type="scientific">Acaryochloris marina (strain MBIC 11017)</name>
    <dbReference type="NCBI Taxonomy" id="329726"/>
    <lineage>
        <taxon>Bacteria</taxon>
        <taxon>Bacillati</taxon>
        <taxon>Cyanobacteriota</taxon>
        <taxon>Cyanophyceae</taxon>
        <taxon>Acaryochloridales</taxon>
        <taxon>Acaryochloridaceae</taxon>
        <taxon>Acaryochloris</taxon>
    </lineage>
</organism>
<accession>B0C390</accession>
<gene>
    <name evidence="1" type="primary">thiG</name>
    <name type="ordered locus">AM1_3599</name>
</gene>
<evidence type="ECO:0000255" key="1">
    <source>
        <dbReference type="HAMAP-Rule" id="MF_00443"/>
    </source>
</evidence>
<proteinExistence type="inferred from homology"/>
<comment type="function">
    <text evidence="1">Catalyzes the rearrangement of 1-deoxy-D-xylulose 5-phosphate (DXP) to produce the thiazole phosphate moiety of thiamine. Sulfur is provided by the thiocarboxylate moiety of the carrier protein ThiS. In vitro, sulfur can be provided by H(2)S.</text>
</comment>
<comment type="catalytic activity">
    <reaction evidence="1">
        <text>[ThiS sulfur-carrier protein]-C-terminal-Gly-aminoethanethioate + 2-iminoacetate + 1-deoxy-D-xylulose 5-phosphate = [ThiS sulfur-carrier protein]-C-terminal Gly-Gly + 2-[(2R,5Z)-2-carboxy-4-methylthiazol-5(2H)-ylidene]ethyl phosphate + 2 H2O + H(+)</text>
        <dbReference type="Rhea" id="RHEA:26297"/>
        <dbReference type="Rhea" id="RHEA-COMP:12909"/>
        <dbReference type="Rhea" id="RHEA-COMP:19908"/>
        <dbReference type="ChEBI" id="CHEBI:15377"/>
        <dbReference type="ChEBI" id="CHEBI:15378"/>
        <dbReference type="ChEBI" id="CHEBI:57792"/>
        <dbReference type="ChEBI" id="CHEBI:62899"/>
        <dbReference type="ChEBI" id="CHEBI:77846"/>
        <dbReference type="ChEBI" id="CHEBI:90778"/>
        <dbReference type="ChEBI" id="CHEBI:232372"/>
        <dbReference type="EC" id="2.8.1.10"/>
    </reaction>
</comment>
<comment type="pathway">
    <text evidence="1">Cofactor biosynthesis; thiamine diphosphate biosynthesis.</text>
</comment>
<comment type="subunit">
    <text evidence="1">Homotetramer. Forms heterodimers with either ThiH or ThiS.</text>
</comment>
<comment type="subcellular location">
    <subcellularLocation>
        <location evidence="1">Cytoplasm</location>
    </subcellularLocation>
</comment>
<comment type="similarity">
    <text evidence="1">Belongs to the ThiG family.</text>
</comment>